<reference key="1">
    <citation type="journal article" date="2009" name="PLoS ONE">
        <title>Complete genome sequence of the aerobic CO-oxidizing thermophile Thermomicrobium roseum.</title>
        <authorList>
            <person name="Wu D."/>
            <person name="Raymond J."/>
            <person name="Wu M."/>
            <person name="Chatterji S."/>
            <person name="Ren Q."/>
            <person name="Graham J.E."/>
            <person name="Bryant D.A."/>
            <person name="Robb F."/>
            <person name="Colman A."/>
            <person name="Tallon L.J."/>
            <person name="Badger J.H."/>
            <person name="Madupu R."/>
            <person name="Ward N.L."/>
            <person name="Eisen J.A."/>
        </authorList>
    </citation>
    <scope>NUCLEOTIDE SEQUENCE [LARGE SCALE GENOMIC DNA]</scope>
    <source>
        <strain>ATCC 27502 / DSM 5159 / P-2</strain>
    </source>
</reference>
<organism>
    <name type="scientific">Thermomicrobium roseum (strain ATCC 27502 / DSM 5159 / P-2)</name>
    <dbReference type="NCBI Taxonomy" id="309801"/>
    <lineage>
        <taxon>Bacteria</taxon>
        <taxon>Pseudomonadati</taxon>
        <taxon>Thermomicrobiota</taxon>
        <taxon>Thermomicrobia</taxon>
        <taxon>Thermomicrobiales</taxon>
        <taxon>Thermomicrobiaceae</taxon>
        <taxon>Thermomicrobium</taxon>
    </lineage>
</organism>
<feature type="chain" id="PRO_1000165708" description="Large ribosomal subunit protein uL1">
    <location>
        <begin position="1"/>
        <end position="241"/>
    </location>
</feature>
<comment type="function">
    <text evidence="1">Binds directly to 23S rRNA. The L1 stalk is quite mobile in the ribosome, and is involved in E site tRNA release.</text>
</comment>
<comment type="function">
    <text evidence="1">Protein L1 is also a translational repressor protein, it controls the translation of the L11 operon by binding to its mRNA.</text>
</comment>
<comment type="subunit">
    <text evidence="1">Part of the 50S ribosomal subunit.</text>
</comment>
<comment type="similarity">
    <text evidence="1">Belongs to the universal ribosomal protein uL1 family.</text>
</comment>
<evidence type="ECO:0000255" key="1">
    <source>
        <dbReference type="HAMAP-Rule" id="MF_01318"/>
    </source>
</evidence>
<evidence type="ECO:0000305" key="2"/>
<dbReference type="EMBL" id="CP001275">
    <property type="protein sequence ID" value="ACM06046.1"/>
    <property type="molecule type" value="Genomic_DNA"/>
</dbReference>
<dbReference type="RefSeq" id="WP_012642074.1">
    <property type="nucleotide sequence ID" value="NC_011959.1"/>
</dbReference>
<dbReference type="SMR" id="B9KYX4"/>
<dbReference type="STRING" id="309801.trd_0682"/>
<dbReference type="KEGG" id="tro:trd_0682"/>
<dbReference type="eggNOG" id="COG0081">
    <property type="taxonomic scope" value="Bacteria"/>
</dbReference>
<dbReference type="HOGENOM" id="CLU_062853_0_0_0"/>
<dbReference type="OrthoDB" id="9803740at2"/>
<dbReference type="Proteomes" id="UP000000447">
    <property type="component" value="Chromosome"/>
</dbReference>
<dbReference type="GO" id="GO:0015934">
    <property type="term" value="C:large ribosomal subunit"/>
    <property type="evidence" value="ECO:0007669"/>
    <property type="project" value="InterPro"/>
</dbReference>
<dbReference type="GO" id="GO:0019843">
    <property type="term" value="F:rRNA binding"/>
    <property type="evidence" value="ECO:0007669"/>
    <property type="project" value="UniProtKB-UniRule"/>
</dbReference>
<dbReference type="GO" id="GO:0003735">
    <property type="term" value="F:structural constituent of ribosome"/>
    <property type="evidence" value="ECO:0007669"/>
    <property type="project" value="InterPro"/>
</dbReference>
<dbReference type="GO" id="GO:0000049">
    <property type="term" value="F:tRNA binding"/>
    <property type="evidence" value="ECO:0007669"/>
    <property type="project" value="UniProtKB-KW"/>
</dbReference>
<dbReference type="GO" id="GO:0006417">
    <property type="term" value="P:regulation of translation"/>
    <property type="evidence" value="ECO:0007669"/>
    <property type="project" value="UniProtKB-KW"/>
</dbReference>
<dbReference type="GO" id="GO:0006412">
    <property type="term" value="P:translation"/>
    <property type="evidence" value="ECO:0007669"/>
    <property type="project" value="UniProtKB-UniRule"/>
</dbReference>
<dbReference type="CDD" id="cd00403">
    <property type="entry name" value="Ribosomal_L1"/>
    <property type="match status" value="1"/>
</dbReference>
<dbReference type="FunFam" id="3.40.50.790:FF:000001">
    <property type="entry name" value="50S ribosomal protein L1"/>
    <property type="match status" value="1"/>
</dbReference>
<dbReference type="Gene3D" id="3.30.190.20">
    <property type="match status" value="1"/>
</dbReference>
<dbReference type="Gene3D" id="3.40.50.790">
    <property type="match status" value="1"/>
</dbReference>
<dbReference type="HAMAP" id="MF_01318_B">
    <property type="entry name" value="Ribosomal_uL1_B"/>
    <property type="match status" value="1"/>
</dbReference>
<dbReference type="InterPro" id="IPR005878">
    <property type="entry name" value="Ribosom_uL1_bac-type"/>
</dbReference>
<dbReference type="InterPro" id="IPR002143">
    <property type="entry name" value="Ribosomal_uL1"/>
</dbReference>
<dbReference type="InterPro" id="IPR023674">
    <property type="entry name" value="Ribosomal_uL1-like"/>
</dbReference>
<dbReference type="InterPro" id="IPR028364">
    <property type="entry name" value="Ribosomal_uL1/biogenesis"/>
</dbReference>
<dbReference type="InterPro" id="IPR016095">
    <property type="entry name" value="Ribosomal_uL1_3-a/b-sand"/>
</dbReference>
<dbReference type="InterPro" id="IPR023673">
    <property type="entry name" value="Ribosomal_uL1_CS"/>
</dbReference>
<dbReference type="NCBIfam" id="TIGR01169">
    <property type="entry name" value="rplA_bact"/>
    <property type="match status" value="1"/>
</dbReference>
<dbReference type="PANTHER" id="PTHR36427">
    <property type="entry name" value="54S RIBOSOMAL PROTEIN L1, MITOCHONDRIAL"/>
    <property type="match status" value="1"/>
</dbReference>
<dbReference type="PANTHER" id="PTHR36427:SF3">
    <property type="entry name" value="LARGE RIBOSOMAL SUBUNIT PROTEIN UL1M"/>
    <property type="match status" value="1"/>
</dbReference>
<dbReference type="Pfam" id="PF00687">
    <property type="entry name" value="Ribosomal_L1"/>
    <property type="match status" value="1"/>
</dbReference>
<dbReference type="PIRSF" id="PIRSF002155">
    <property type="entry name" value="Ribosomal_L1"/>
    <property type="match status" value="1"/>
</dbReference>
<dbReference type="SUPFAM" id="SSF56808">
    <property type="entry name" value="Ribosomal protein L1"/>
    <property type="match status" value="1"/>
</dbReference>
<dbReference type="PROSITE" id="PS01199">
    <property type="entry name" value="RIBOSOMAL_L1"/>
    <property type="match status" value="1"/>
</dbReference>
<proteinExistence type="inferred from homology"/>
<accession>B9KYX4</accession>
<keyword id="KW-1185">Reference proteome</keyword>
<keyword id="KW-0678">Repressor</keyword>
<keyword id="KW-0687">Ribonucleoprotein</keyword>
<keyword id="KW-0689">Ribosomal protein</keyword>
<keyword id="KW-0694">RNA-binding</keyword>
<keyword id="KW-0699">rRNA-binding</keyword>
<keyword id="KW-0810">Translation regulation</keyword>
<keyword id="KW-0820">tRNA-binding</keyword>
<sequence>MPKHGKKYLEALKLVDVTRRYSPKEAVELVKKVAHADFDESIDLHIKLNIDPRHADQNVRGTVTLPHGTGRTPRVLVFAVGEAARIAEEAGADYVGSDDLIRQIEGGWLEFDAAIAMADQMGKVGPLGRILGRRGLMPNPRTGTVVRNPEDLPAVIREIKGGRVEFRNDRTGNIHLQIGRKSFTDQQLLENLYVAVDAIARARPQAVKGQFFQSMTIAPTMGPGIPLDVATTVEEARQFVT</sequence>
<protein>
    <recommendedName>
        <fullName evidence="1">Large ribosomal subunit protein uL1</fullName>
    </recommendedName>
    <alternativeName>
        <fullName evidence="2">50S ribosomal protein L1</fullName>
    </alternativeName>
</protein>
<gene>
    <name evidence="1" type="primary">rplA</name>
    <name type="ordered locus">trd_0682</name>
</gene>
<name>RL1_THERP</name>